<dbReference type="EC" id="2.3.2.13" evidence="1"/>
<dbReference type="EMBL" id="BT025350">
    <property type="protein sequence ID" value="ABF57306.1"/>
    <property type="molecule type" value="mRNA"/>
</dbReference>
<dbReference type="PIR" id="A10933">
    <property type="entry name" value="A10933"/>
</dbReference>
<dbReference type="SMR" id="P12260"/>
<dbReference type="STRING" id="9913.ENSBTAP00000009559"/>
<dbReference type="ChEMBL" id="CHEMBL5291510"/>
<dbReference type="PaxDb" id="9913-ENSBTAP00000009559"/>
<dbReference type="eggNOG" id="ENOG502QQ46">
    <property type="taxonomic scope" value="Eukaryota"/>
</dbReference>
<dbReference type="HOGENOM" id="CLU_013435_0_2_1"/>
<dbReference type="InParanoid" id="P12260"/>
<dbReference type="OrthoDB" id="437511at2759"/>
<dbReference type="Proteomes" id="UP000009136">
    <property type="component" value="Unplaced"/>
</dbReference>
<dbReference type="GO" id="GO:0005737">
    <property type="term" value="C:cytoplasm"/>
    <property type="evidence" value="ECO:0007669"/>
    <property type="project" value="UniProtKB-SubCell"/>
</dbReference>
<dbReference type="GO" id="GO:0005576">
    <property type="term" value="C:extracellular region"/>
    <property type="evidence" value="ECO:0007669"/>
    <property type="project" value="UniProtKB-SubCell"/>
</dbReference>
<dbReference type="GO" id="GO:0003810">
    <property type="term" value="F:protein-glutamine gamma-glutamyltransferase activity"/>
    <property type="evidence" value="ECO:0000250"/>
    <property type="project" value="UniProtKB"/>
</dbReference>
<dbReference type="GO" id="GO:0072378">
    <property type="term" value="P:blood coagulation, fibrin clot formation"/>
    <property type="evidence" value="ECO:0000250"/>
    <property type="project" value="UniProtKB"/>
</dbReference>
<dbReference type="GO" id="GO:0018149">
    <property type="term" value="P:peptide cross-linking"/>
    <property type="evidence" value="ECO:0000250"/>
    <property type="project" value="UniProtKB"/>
</dbReference>
<dbReference type="FunFam" id="2.60.40.10:FF:000978">
    <property type="entry name" value="coagulation factor XIII A chain"/>
    <property type="match status" value="1"/>
</dbReference>
<dbReference type="Gene3D" id="2.60.40.10">
    <property type="entry name" value="Immunoglobulins"/>
    <property type="match status" value="1"/>
</dbReference>
<dbReference type="InterPro" id="IPR013783">
    <property type="entry name" value="Ig-like_fold"/>
</dbReference>
<dbReference type="InterPro" id="IPR014756">
    <property type="entry name" value="Ig_E-set"/>
</dbReference>
<dbReference type="InterPro" id="IPR050779">
    <property type="entry name" value="Transglutaminase"/>
</dbReference>
<dbReference type="InterPro" id="IPR001102">
    <property type="entry name" value="Transglutaminase_N"/>
</dbReference>
<dbReference type="PANTHER" id="PTHR11590:SF42">
    <property type="entry name" value="COAGULATION FACTOR XIII A CHAIN"/>
    <property type="match status" value="1"/>
</dbReference>
<dbReference type="PANTHER" id="PTHR11590">
    <property type="entry name" value="PROTEIN-GLUTAMINE GAMMA-GLUTAMYLTRANSFERASE"/>
    <property type="match status" value="1"/>
</dbReference>
<dbReference type="Pfam" id="PF00868">
    <property type="entry name" value="Transglut_N"/>
    <property type="match status" value="1"/>
</dbReference>
<dbReference type="SUPFAM" id="SSF81296">
    <property type="entry name" value="E set domains"/>
    <property type="match status" value="1"/>
</dbReference>
<name>F13A_BOVIN</name>
<keyword id="KW-0007">Acetylation</keyword>
<keyword id="KW-0012">Acyltransferase</keyword>
<keyword id="KW-0094">Blood coagulation</keyword>
<keyword id="KW-0106">Calcium</keyword>
<keyword id="KW-0963">Cytoplasm</keyword>
<keyword id="KW-0903">Direct protein sequencing</keyword>
<keyword id="KW-0356">Hemostasis</keyword>
<keyword id="KW-1185">Reference proteome</keyword>
<keyword id="KW-0964">Secreted</keyword>
<keyword id="KW-0808">Transferase</keyword>
<keyword id="KW-0865">Zymogen</keyword>
<organism>
    <name type="scientific">Bos taurus</name>
    <name type="common">Bovine</name>
    <dbReference type="NCBI Taxonomy" id="9913"/>
    <lineage>
        <taxon>Eukaryota</taxon>
        <taxon>Metazoa</taxon>
        <taxon>Chordata</taxon>
        <taxon>Craniata</taxon>
        <taxon>Vertebrata</taxon>
        <taxon>Euteleostomi</taxon>
        <taxon>Mammalia</taxon>
        <taxon>Eutheria</taxon>
        <taxon>Laurasiatheria</taxon>
        <taxon>Artiodactyla</taxon>
        <taxon>Ruminantia</taxon>
        <taxon>Pecora</taxon>
        <taxon>Bovidae</taxon>
        <taxon>Bovinae</taxon>
        <taxon>Bos</taxon>
    </lineage>
</organism>
<evidence type="ECO:0000250" key="1">
    <source>
        <dbReference type="UniProtKB" id="P00488"/>
    </source>
</evidence>
<evidence type="ECO:0000256" key="2">
    <source>
        <dbReference type="SAM" id="MobiDB-lite"/>
    </source>
</evidence>
<evidence type="ECO:0000269" key="3">
    <source>
    </source>
</evidence>
<evidence type="ECO:0000305" key="4"/>
<gene>
    <name type="primary">F13A1</name>
    <name type="synonym">F13A</name>
</gene>
<protein>
    <recommendedName>
        <fullName>Coagulation factor XIII A chain</fullName>
        <shortName>Coagulation factor XIIIa</shortName>
        <ecNumber evidence="1">2.3.2.13</ecNumber>
    </recommendedName>
    <alternativeName>
        <fullName>Protein-glutamine gamma-glutamyltransferase A chain</fullName>
    </alternativeName>
    <alternativeName>
        <fullName>Transglutaminase A chain</fullName>
    </alternativeName>
</protein>
<feature type="initiator methionine" description="Removed" evidence="1 3">
    <location>
        <position position="1"/>
    </location>
</feature>
<feature type="propeptide" id="PRO_0000033645" description="Activation peptide">
    <location>
        <begin position="2"/>
        <end position="38"/>
    </location>
</feature>
<feature type="chain" id="PRO_0000351119" description="Coagulation factor XIII A chain">
    <location>
        <begin position="39"/>
        <end position="198" status="greater than"/>
    </location>
</feature>
<feature type="region of interest" description="Disordered" evidence="2">
    <location>
        <begin position="1"/>
        <end position="36"/>
    </location>
</feature>
<feature type="site" description="Cleavage; by thrombin; to produce active factor XIII-A">
    <location>
        <begin position="38"/>
        <end position="39"/>
    </location>
</feature>
<feature type="modified residue" description="N-acetylserine" evidence="1">
    <location>
        <position position="2"/>
    </location>
</feature>
<feature type="sequence conflict" description="In Ref. 2; AA sequence." evidence="4" ref="2">
    <original>N</original>
    <variation>D</variation>
    <location>
        <position position="25"/>
    </location>
</feature>
<feature type="non-terminal residue">
    <location>
        <position position="198"/>
    </location>
</feature>
<comment type="function">
    <text evidence="1">Factor XIII is activated by thrombin and calcium ion to a transglutaminase that catalyzes the formation of gamma-glutamyl-epsilon-lysine cross-links between fibrin chains, thus stabilizing the fibrin clot. Also cross-link alpha-2-plasmin inhibitor, or fibronectin, to the alpha chains of fibrin.</text>
</comment>
<comment type="catalytic activity">
    <reaction evidence="1">
        <text>L-glutaminyl-[protein] + L-lysyl-[protein] = [protein]-L-lysyl-N(6)-5-L-glutamyl-[protein] + NH4(+)</text>
        <dbReference type="Rhea" id="RHEA:54816"/>
        <dbReference type="Rhea" id="RHEA-COMP:9752"/>
        <dbReference type="Rhea" id="RHEA-COMP:10207"/>
        <dbReference type="Rhea" id="RHEA-COMP:14005"/>
        <dbReference type="ChEBI" id="CHEBI:28938"/>
        <dbReference type="ChEBI" id="CHEBI:29969"/>
        <dbReference type="ChEBI" id="CHEBI:30011"/>
        <dbReference type="ChEBI" id="CHEBI:138370"/>
        <dbReference type="EC" id="2.3.2.13"/>
    </reaction>
</comment>
<comment type="cofactor">
    <cofactor evidence="1">
        <name>Ca(2+)</name>
        <dbReference type="ChEBI" id="CHEBI:29108"/>
    </cofactor>
    <text evidence="1">Binds 1 Ca(2+) ion per subunit.</text>
</comment>
<comment type="subunit">
    <text evidence="1">Tetramer of two A chains (F13A1) and two B (F13B) chains.</text>
</comment>
<comment type="subcellular location">
    <subcellularLocation>
        <location evidence="1">Cytoplasm</location>
    </subcellularLocation>
    <subcellularLocation>
        <location evidence="1">Secreted</location>
    </subcellularLocation>
    <text evidence="1">Secreted into the blood plasma. Cytoplasmic in most tissues, but also secreted in the blood plasma.</text>
</comment>
<comment type="PTM">
    <text>The activation peptide is released by thrombin.</text>
</comment>
<comment type="similarity">
    <text evidence="4">Belongs to the transglutaminase superfamily. Transglutaminase family.</text>
</comment>
<proteinExistence type="evidence at protein level"/>
<reference key="1">
    <citation type="journal article" date="2005" name="BMC Genomics">
        <title>Characterization of 954 bovine full-CDS cDNA sequences.</title>
        <authorList>
            <person name="Harhay G.P."/>
            <person name="Sonstegard T.S."/>
            <person name="Keele J.W."/>
            <person name="Heaton M.P."/>
            <person name="Clawson M.L."/>
            <person name="Snelling W.M."/>
            <person name="Wiedmann R.T."/>
            <person name="Van Tassell C.P."/>
            <person name="Smith T.P.L."/>
        </authorList>
    </citation>
    <scope>NUCLEOTIDE SEQUENCE [LARGE SCALE MRNA]</scope>
</reference>
<reference key="2">
    <citation type="journal article" date="1974" name="Biochem. Biophys. Res. Commun.">
        <title>Amino acid sequence of the peptide released from bovine factor XIII following activation by thrombin.</title>
        <authorList>
            <person name="Nakamura S."/>
            <person name="Iwanaga S."/>
            <person name="Suzuki T."/>
            <person name="Mikuni Y."/>
            <person name="Konishi K."/>
        </authorList>
    </citation>
    <scope>PROTEIN SEQUENCE OF 2-38</scope>
</reference>
<accession>P12260</accession>
<accession>Q1JPK3</accession>
<sequence>MSESSGTAFGGRRAIPPNTSNAAENDPPTVELQGLVPRGFNPQDYLNVTNVHLFKERWDSNKVDHHTDKYSNDKLIVRRGQSFYIQIDFNRPYDPTRDLFRVEYVIGLYPQENKGTYIPVPLVSELQSGKWGAKVVMREDRSVRLSVQSSADCIVGKFRMYVAVWTPYGVIRTSRNPETDTYILFNPWCEEDAVYLEN</sequence>